<gene>
    <name type="primary">TYR</name>
</gene>
<keyword id="KW-0186">Copper</keyword>
<keyword id="KW-0325">Glycoprotein</keyword>
<keyword id="KW-0470">Melanin biosynthesis</keyword>
<keyword id="KW-0472">Membrane</keyword>
<keyword id="KW-0479">Metal-binding</keyword>
<keyword id="KW-0503">Monooxygenase</keyword>
<keyword id="KW-0560">Oxidoreductase</keyword>
<keyword id="KW-1185">Reference proteome</keyword>
<keyword id="KW-0732">Signal</keyword>
<keyword id="KW-0812">Transmembrane</keyword>
<sequence length="273" mass="31500">MLLFTMGLLLAILQPSTGQFPRVCANTQSLLRKECCPPWEGDGSPCGERSNRGTCQRILLSQAPLGPQFPFSGVDDREDWPSVFYNRTCRCRGNFMGFNCGECKFGFSGQNCTERRLRTRRNIFQLTIREKDKFLAYLNLAKNIPSKDYVIATGTYAQMNNGSNPMFRNINVYDLFVWMHYYASRDTLLGGSNVWRDIDFAHEAPGFLPWHRAFLLLWEREIQKITGDENFTIPYWDWRDAEDCVICTDEYMGGQHPTNPNLLSPASFFSSWQ</sequence>
<comment type="function">
    <text evidence="1">This is a copper-containing oxidase that functions in the formation of pigments such as melanins and other polyphenolic compounds (By similarity). Catalyzes the initial and rate limiting step in the cascade of reactions leading to melanin production from tyrosine (By similarity). In addition to hydroxylating tyrosine to DOPA (3,4-dihydroxyphenylalanine), also catalyzes the oxidation of DOPA to DOPA-quinone, and possibly the oxidation of DHI (5,6-dihydroxyindole) to indole-5,6 quinone (By similarity).</text>
</comment>
<comment type="catalytic activity">
    <reaction evidence="1">
        <text>2 L-dopa + O2 = 2 L-dopaquinone + 2 H2O</text>
        <dbReference type="Rhea" id="RHEA:34287"/>
        <dbReference type="ChEBI" id="CHEBI:15377"/>
        <dbReference type="ChEBI" id="CHEBI:15379"/>
        <dbReference type="ChEBI" id="CHEBI:57504"/>
        <dbReference type="ChEBI" id="CHEBI:57924"/>
        <dbReference type="EC" id="1.14.18.1"/>
    </reaction>
</comment>
<comment type="catalytic activity">
    <reaction evidence="1">
        <text>L-tyrosine + O2 = L-dopaquinone + H2O</text>
        <dbReference type="Rhea" id="RHEA:18117"/>
        <dbReference type="ChEBI" id="CHEBI:15377"/>
        <dbReference type="ChEBI" id="CHEBI:15379"/>
        <dbReference type="ChEBI" id="CHEBI:57924"/>
        <dbReference type="ChEBI" id="CHEBI:58315"/>
        <dbReference type="EC" id="1.14.18.1"/>
    </reaction>
</comment>
<comment type="cofactor">
    <cofactor evidence="3">
        <name>Cu(2+)</name>
        <dbReference type="ChEBI" id="CHEBI:29036"/>
    </cofactor>
    <text evidence="3">Binds 2 copper ions per subunit.</text>
</comment>
<comment type="subcellular location">
    <subcellularLocation>
        <location evidence="2">Melanosome membrane</location>
        <topology evidence="2">Single-pass type I membrane protein</topology>
    </subcellularLocation>
    <subcellularLocation>
        <location evidence="1">Melanosome</location>
    </subcellularLocation>
    <text evidence="1">Proper trafficking to melanosome is regulated by SGSM2, ANKRD27, RAB9A, RAB32 and RAB38.</text>
</comment>
<comment type="similarity">
    <text evidence="5">Belongs to the tyrosinase family.</text>
</comment>
<proteinExistence type="inferred from homology"/>
<reference key="1">
    <citation type="journal article" date="1992" name="Pigment Cell Res.">
        <title>Phylogeny of regulatory regions of vertebrate tyrosinase genes.</title>
        <authorList>
            <person name="Yamamoto H."/>
            <person name="Kudo T."/>
            <person name="Masuko N."/>
            <person name="Miura H."/>
            <person name="Sato S."/>
            <person name="Tanaka M."/>
            <person name="Tanaka S."/>
            <person name="Takeuchi S."/>
            <person name="Shibahara S."/>
            <person name="Takeuchi T."/>
        </authorList>
    </citation>
    <scope>NUCLEOTIDE SEQUENCE [GENOMIC DNA]</scope>
</reference>
<name>TYRO_COTJA</name>
<evidence type="ECO:0000250" key="1">
    <source>
        <dbReference type="UniProtKB" id="P11344"/>
    </source>
</evidence>
<evidence type="ECO:0000250" key="2">
    <source>
        <dbReference type="UniProtKB" id="P14679"/>
    </source>
</evidence>
<evidence type="ECO:0000250" key="3">
    <source>
        <dbReference type="UniProtKB" id="Q9ZP19"/>
    </source>
</evidence>
<evidence type="ECO:0000255" key="4"/>
<evidence type="ECO:0000305" key="5"/>
<protein>
    <recommendedName>
        <fullName>Tyrosinase</fullName>
        <ecNumber>1.14.18.1</ecNumber>
    </recommendedName>
    <alternativeName>
        <fullName>Monophenol monooxygenase</fullName>
    </alternativeName>
</protein>
<feature type="signal peptide" evidence="4">
    <location>
        <begin position="1"/>
        <end position="18"/>
    </location>
</feature>
<feature type="chain" id="PRO_0000035882" description="Tyrosinase">
    <location>
        <begin position="19"/>
        <end position="273" status="greater than"/>
    </location>
</feature>
<feature type="binding site" evidence="3">
    <location>
        <position position="180"/>
    </location>
    <ligand>
        <name>Cu cation</name>
        <dbReference type="ChEBI" id="CHEBI:23378"/>
        <label>A</label>
    </ligand>
</feature>
<feature type="binding site" evidence="3">
    <location>
        <position position="202"/>
    </location>
    <ligand>
        <name>Cu cation</name>
        <dbReference type="ChEBI" id="CHEBI:23378"/>
        <label>A</label>
    </ligand>
</feature>
<feature type="binding site" evidence="3">
    <location>
        <position position="211"/>
    </location>
    <ligand>
        <name>Cu cation</name>
        <dbReference type="ChEBI" id="CHEBI:23378"/>
        <label>A</label>
    </ligand>
</feature>
<feature type="glycosylation site" description="N-linked (GlcNAc...) asparagine" evidence="4">
    <location>
        <position position="86"/>
    </location>
</feature>
<feature type="glycosylation site" description="N-linked (GlcNAc...) asparagine" evidence="4">
    <location>
        <position position="111"/>
    </location>
</feature>
<feature type="glycosylation site" description="N-linked (GlcNAc...) asparagine" evidence="4">
    <location>
        <position position="161"/>
    </location>
</feature>
<feature type="glycosylation site" description="N-linked (GlcNAc...) asparagine" evidence="4">
    <location>
        <position position="230"/>
    </location>
</feature>
<feature type="non-terminal residue">
    <location>
        <position position="273"/>
    </location>
</feature>
<organism>
    <name type="scientific">Coturnix japonica</name>
    <name type="common">Japanese quail</name>
    <name type="synonym">Coturnix coturnix japonica</name>
    <dbReference type="NCBI Taxonomy" id="93934"/>
    <lineage>
        <taxon>Eukaryota</taxon>
        <taxon>Metazoa</taxon>
        <taxon>Chordata</taxon>
        <taxon>Craniata</taxon>
        <taxon>Vertebrata</taxon>
        <taxon>Euteleostomi</taxon>
        <taxon>Archelosauria</taxon>
        <taxon>Archosauria</taxon>
        <taxon>Dinosauria</taxon>
        <taxon>Saurischia</taxon>
        <taxon>Theropoda</taxon>
        <taxon>Coelurosauria</taxon>
        <taxon>Aves</taxon>
        <taxon>Neognathae</taxon>
        <taxon>Galloanserae</taxon>
        <taxon>Galliformes</taxon>
        <taxon>Phasianidae</taxon>
        <taxon>Perdicinae</taxon>
        <taxon>Coturnix</taxon>
    </lineage>
</organism>
<accession>Q08410</accession>
<accession>Q54AH4</accession>
<dbReference type="EC" id="1.14.18.1"/>
<dbReference type="EMBL" id="AB024279">
    <property type="protein sequence ID" value="BAB21535.1"/>
    <property type="molecule type" value="Genomic_DNA"/>
</dbReference>
<dbReference type="EMBL" id="S56788">
    <property type="protein sequence ID" value="AAB25510.1"/>
    <property type="molecule type" value="Genomic_DNA"/>
</dbReference>
<dbReference type="SMR" id="Q08410"/>
<dbReference type="GlyCosmos" id="Q08410">
    <property type="glycosylation" value="4 sites, No reported glycans"/>
</dbReference>
<dbReference type="Proteomes" id="UP000694412">
    <property type="component" value="Unplaced"/>
</dbReference>
<dbReference type="GO" id="GO:0042470">
    <property type="term" value="C:melanosome"/>
    <property type="evidence" value="ECO:0000250"/>
    <property type="project" value="UniProtKB"/>
</dbReference>
<dbReference type="GO" id="GO:0033162">
    <property type="term" value="C:melanosome membrane"/>
    <property type="evidence" value="ECO:0007669"/>
    <property type="project" value="UniProtKB-SubCell"/>
</dbReference>
<dbReference type="GO" id="GO:0046872">
    <property type="term" value="F:metal ion binding"/>
    <property type="evidence" value="ECO:0007669"/>
    <property type="project" value="UniProtKB-KW"/>
</dbReference>
<dbReference type="GO" id="GO:0004503">
    <property type="term" value="F:tyrosinase activity"/>
    <property type="evidence" value="ECO:0007669"/>
    <property type="project" value="UniProtKB-EC"/>
</dbReference>
<dbReference type="GO" id="GO:0042438">
    <property type="term" value="P:melanin biosynthetic process"/>
    <property type="evidence" value="ECO:0007669"/>
    <property type="project" value="UniProtKB-KW"/>
</dbReference>
<dbReference type="GO" id="GO:0043473">
    <property type="term" value="P:pigmentation"/>
    <property type="evidence" value="ECO:0007669"/>
    <property type="project" value="TreeGrafter"/>
</dbReference>
<dbReference type="GO" id="GO:0009637">
    <property type="term" value="P:response to blue light"/>
    <property type="evidence" value="ECO:0000250"/>
    <property type="project" value="UniProtKB"/>
</dbReference>
<dbReference type="FunFam" id="1.10.1280.10:FF:000020">
    <property type="entry name" value="Tyrosinase"/>
    <property type="match status" value="1"/>
</dbReference>
<dbReference type="Gene3D" id="1.10.1280.10">
    <property type="entry name" value="Di-copper center containing domain from catechol oxidase"/>
    <property type="match status" value="1"/>
</dbReference>
<dbReference type="InterPro" id="IPR008922">
    <property type="entry name" value="Di-copper_centre_dom_sf"/>
</dbReference>
<dbReference type="InterPro" id="IPR050316">
    <property type="entry name" value="Tyrosinase/Hemocyanin"/>
</dbReference>
<dbReference type="InterPro" id="IPR002227">
    <property type="entry name" value="Tyrosinase_Cu-bd"/>
</dbReference>
<dbReference type="PANTHER" id="PTHR11474:SF124">
    <property type="entry name" value="TYROSINASE"/>
    <property type="match status" value="1"/>
</dbReference>
<dbReference type="PANTHER" id="PTHR11474">
    <property type="entry name" value="TYROSINASE FAMILY MEMBER"/>
    <property type="match status" value="1"/>
</dbReference>
<dbReference type="Pfam" id="PF00264">
    <property type="entry name" value="Tyrosinase"/>
    <property type="match status" value="1"/>
</dbReference>
<dbReference type="PRINTS" id="PR00092">
    <property type="entry name" value="TYROSINASE"/>
</dbReference>
<dbReference type="SUPFAM" id="SSF48056">
    <property type="entry name" value="Di-copper centre-containing domain"/>
    <property type="match status" value="1"/>
</dbReference>
<dbReference type="PROSITE" id="PS00497">
    <property type="entry name" value="TYROSINASE_1"/>
    <property type="match status" value="1"/>
</dbReference>